<reference key="1">
    <citation type="journal article" date="2000" name="Nature">
        <title>Genome sequence of the endocellular bacterial symbiont of aphids Buchnera sp. APS.</title>
        <authorList>
            <person name="Shigenobu S."/>
            <person name="Watanabe H."/>
            <person name="Hattori M."/>
            <person name="Sakaki Y."/>
            <person name="Ishikawa H."/>
        </authorList>
    </citation>
    <scope>NUCLEOTIDE SEQUENCE [LARGE SCALE GENOMIC DNA]</scope>
    <source>
        <strain>APS</strain>
    </source>
</reference>
<name>TAL_BUCAI</name>
<sequence>MNQLSALKQFSIIVADTSDIKSICKYQPEDATTNPSLILQAVSSNTNQNFVDQAVQYAKKKGGLYKDQIINASDKILVDLGIEILKKIPGYISSEVDARLSFSTEASILKAKKIIDLYEEQGISRNRVLIKLAATWECIKAAEELKKDSILCNLTLLFSFAQARACAESNVFLISPFVGRIYDWYISQNLLSKSFLGKDPGVISVCKIYEYYKKYGYKTIIMGASFRNIQQILYLSGCDRLTISPVLLKELESNTAKIDRNLAPPSFISVPPVALSEEEFRWEHNQDAMAVQKLSDGIRNFGKDQLRLEKIFSKKI</sequence>
<proteinExistence type="inferred from homology"/>
<organism>
    <name type="scientific">Buchnera aphidicola subsp. Acyrthosiphon pisum (strain APS)</name>
    <name type="common">Acyrthosiphon pisum symbiotic bacterium</name>
    <dbReference type="NCBI Taxonomy" id="107806"/>
    <lineage>
        <taxon>Bacteria</taxon>
        <taxon>Pseudomonadati</taxon>
        <taxon>Pseudomonadota</taxon>
        <taxon>Gammaproteobacteria</taxon>
        <taxon>Enterobacterales</taxon>
        <taxon>Erwiniaceae</taxon>
        <taxon>Buchnera</taxon>
    </lineage>
</organism>
<dbReference type="EC" id="2.2.1.2" evidence="1"/>
<dbReference type="EMBL" id="BA000003">
    <property type="protein sequence ID" value="BAB12812.1"/>
    <property type="molecule type" value="Genomic_DNA"/>
</dbReference>
<dbReference type="RefSeq" id="NP_239926.1">
    <property type="nucleotide sequence ID" value="NC_002528.1"/>
</dbReference>
<dbReference type="RefSeq" id="WP_009874046.1">
    <property type="nucleotide sequence ID" value="NZ_AP036055.1"/>
</dbReference>
<dbReference type="SMR" id="P57194"/>
<dbReference type="STRING" id="563178.BUAP5A_091"/>
<dbReference type="EnsemblBacteria" id="BAB12812">
    <property type="protein sequence ID" value="BAB12812"/>
    <property type="gene ID" value="BAB12812"/>
</dbReference>
<dbReference type="KEGG" id="buc:BU093"/>
<dbReference type="PATRIC" id="fig|107806.10.peg.100"/>
<dbReference type="eggNOG" id="COG0176">
    <property type="taxonomic scope" value="Bacteria"/>
</dbReference>
<dbReference type="HOGENOM" id="CLU_047470_0_1_6"/>
<dbReference type="UniPathway" id="UPA00115">
    <property type="reaction ID" value="UER00414"/>
</dbReference>
<dbReference type="Proteomes" id="UP000001806">
    <property type="component" value="Chromosome"/>
</dbReference>
<dbReference type="GO" id="GO:0005829">
    <property type="term" value="C:cytosol"/>
    <property type="evidence" value="ECO:0007669"/>
    <property type="project" value="TreeGrafter"/>
</dbReference>
<dbReference type="GO" id="GO:0004801">
    <property type="term" value="F:transaldolase activity"/>
    <property type="evidence" value="ECO:0000250"/>
    <property type="project" value="UniProtKB"/>
</dbReference>
<dbReference type="GO" id="GO:0005975">
    <property type="term" value="P:carbohydrate metabolic process"/>
    <property type="evidence" value="ECO:0007669"/>
    <property type="project" value="InterPro"/>
</dbReference>
<dbReference type="GO" id="GO:0006098">
    <property type="term" value="P:pentose-phosphate shunt"/>
    <property type="evidence" value="ECO:0007669"/>
    <property type="project" value="UniProtKB-UniRule"/>
</dbReference>
<dbReference type="CDD" id="cd00957">
    <property type="entry name" value="Transaldolase_TalAB"/>
    <property type="match status" value="1"/>
</dbReference>
<dbReference type="FunFam" id="3.20.20.70:FF:000131">
    <property type="entry name" value="Transaldolase"/>
    <property type="match status" value="1"/>
</dbReference>
<dbReference type="Gene3D" id="3.20.20.70">
    <property type="entry name" value="Aldolase class I"/>
    <property type="match status" value="1"/>
</dbReference>
<dbReference type="HAMAP" id="MF_00492">
    <property type="entry name" value="Transaldolase_1"/>
    <property type="match status" value="1"/>
</dbReference>
<dbReference type="InterPro" id="IPR013785">
    <property type="entry name" value="Aldolase_TIM"/>
</dbReference>
<dbReference type="InterPro" id="IPR001585">
    <property type="entry name" value="TAL/FSA"/>
</dbReference>
<dbReference type="InterPro" id="IPR004730">
    <property type="entry name" value="Transaldolase_1"/>
</dbReference>
<dbReference type="InterPro" id="IPR018225">
    <property type="entry name" value="Transaldolase_AS"/>
</dbReference>
<dbReference type="NCBIfam" id="NF009001">
    <property type="entry name" value="PRK12346.1"/>
    <property type="match status" value="1"/>
</dbReference>
<dbReference type="NCBIfam" id="TIGR00874">
    <property type="entry name" value="talAB"/>
    <property type="match status" value="1"/>
</dbReference>
<dbReference type="PANTHER" id="PTHR10683">
    <property type="entry name" value="TRANSALDOLASE"/>
    <property type="match status" value="1"/>
</dbReference>
<dbReference type="PANTHER" id="PTHR10683:SF16">
    <property type="entry name" value="TRANSALDOLASE A"/>
    <property type="match status" value="1"/>
</dbReference>
<dbReference type="Pfam" id="PF00923">
    <property type="entry name" value="TAL_FSA"/>
    <property type="match status" value="1"/>
</dbReference>
<dbReference type="SUPFAM" id="SSF51569">
    <property type="entry name" value="Aldolase"/>
    <property type="match status" value="1"/>
</dbReference>
<dbReference type="PROSITE" id="PS01054">
    <property type="entry name" value="TRANSALDOLASE_1"/>
    <property type="match status" value="1"/>
</dbReference>
<dbReference type="PROSITE" id="PS00958">
    <property type="entry name" value="TRANSALDOLASE_2"/>
    <property type="match status" value="1"/>
</dbReference>
<keyword id="KW-0963">Cytoplasm</keyword>
<keyword id="KW-0570">Pentose shunt</keyword>
<keyword id="KW-1185">Reference proteome</keyword>
<keyword id="KW-0704">Schiff base</keyword>
<keyword id="KW-0808">Transferase</keyword>
<feature type="chain" id="PRO_0000173582" description="Transaldolase">
    <location>
        <begin position="1"/>
        <end position="316"/>
    </location>
</feature>
<feature type="active site" description="Schiff-base intermediate with substrate" evidence="1">
    <location>
        <position position="131"/>
    </location>
</feature>
<gene>
    <name evidence="1" type="primary">tal</name>
    <name type="ordered locus">BU093</name>
</gene>
<accession>P57194</accession>
<protein>
    <recommendedName>
        <fullName evidence="1">Transaldolase</fullName>
        <ecNumber evidence="1">2.2.1.2</ecNumber>
    </recommendedName>
</protein>
<comment type="function">
    <text evidence="1">Transaldolase is important for the balance of metabolites in the pentose-phosphate pathway.</text>
</comment>
<comment type="catalytic activity">
    <reaction evidence="1">
        <text>D-sedoheptulose 7-phosphate + D-glyceraldehyde 3-phosphate = D-erythrose 4-phosphate + beta-D-fructose 6-phosphate</text>
        <dbReference type="Rhea" id="RHEA:17053"/>
        <dbReference type="ChEBI" id="CHEBI:16897"/>
        <dbReference type="ChEBI" id="CHEBI:57483"/>
        <dbReference type="ChEBI" id="CHEBI:57634"/>
        <dbReference type="ChEBI" id="CHEBI:59776"/>
        <dbReference type="EC" id="2.2.1.2"/>
    </reaction>
</comment>
<comment type="pathway">
    <text evidence="1">Carbohydrate degradation; pentose phosphate pathway; D-glyceraldehyde 3-phosphate and beta-D-fructose 6-phosphate from D-ribose 5-phosphate and D-xylulose 5-phosphate (non-oxidative stage): step 2/3.</text>
</comment>
<comment type="subcellular location">
    <subcellularLocation>
        <location evidence="1">Cytoplasm</location>
    </subcellularLocation>
</comment>
<comment type="similarity">
    <text evidence="1 2">Belongs to the transaldolase family. Type 1 subfamily.</text>
</comment>
<evidence type="ECO:0000255" key="1">
    <source>
        <dbReference type="HAMAP-Rule" id="MF_00492"/>
    </source>
</evidence>
<evidence type="ECO:0000305" key="2"/>